<dbReference type="EC" id="1.2.1.41" evidence="1"/>
<dbReference type="EMBL" id="AE009949">
    <property type="protein sequence ID" value="AAL98220.1"/>
    <property type="molecule type" value="Genomic_DNA"/>
</dbReference>
<dbReference type="RefSeq" id="WP_011018075.1">
    <property type="nucleotide sequence ID" value="NC_003485.1"/>
</dbReference>
<dbReference type="SMR" id="Q8NZX9"/>
<dbReference type="KEGG" id="spm:spyM18_1679"/>
<dbReference type="HOGENOM" id="CLU_030231_0_0_9"/>
<dbReference type="UniPathway" id="UPA00098">
    <property type="reaction ID" value="UER00360"/>
</dbReference>
<dbReference type="GO" id="GO:0005737">
    <property type="term" value="C:cytoplasm"/>
    <property type="evidence" value="ECO:0007669"/>
    <property type="project" value="UniProtKB-SubCell"/>
</dbReference>
<dbReference type="GO" id="GO:0004350">
    <property type="term" value="F:glutamate-5-semialdehyde dehydrogenase activity"/>
    <property type="evidence" value="ECO:0007669"/>
    <property type="project" value="UniProtKB-UniRule"/>
</dbReference>
<dbReference type="GO" id="GO:0050661">
    <property type="term" value="F:NADP binding"/>
    <property type="evidence" value="ECO:0007669"/>
    <property type="project" value="InterPro"/>
</dbReference>
<dbReference type="GO" id="GO:0055129">
    <property type="term" value="P:L-proline biosynthetic process"/>
    <property type="evidence" value="ECO:0007669"/>
    <property type="project" value="UniProtKB-UniRule"/>
</dbReference>
<dbReference type="CDD" id="cd07079">
    <property type="entry name" value="ALDH_F18-19_ProA-GPR"/>
    <property type="match status" value="1"/>
</dbReference>
<dbReference type="FunFam" id="3.40.309.10:FF:000006">
    <property type="entry name" value="Gamma-glutamyl phosphate reductase"/>
    <property type="match status" value="1"/>
</dbReference>
<dbReference type="Gene3D" id="3.40.605.10">
    <property type="entry name" value="Aldehyde Dehydrogenase, Chain A, domain 1"/>
    <property type="match status" value="1"/>
</dbReference>
<dbReference type="Gene3D" id="3.40.309.10">
    <property type="entry name" value="Aldehyde Dehydrogenase, Chain A, domain 2"/>
    <property type="match status" value="1"/>
</dbReference>
<dbReference type="HAMAP" id="MF_00412">
    <property type="entry name" value="ProA"/>
    <property type="match status" value="1"/>
</dbReference>
<dbReference type="InterPro" id="IPR016161">
    <property type="entry name" value="Ald_DH/histidinol_DH"/>
</dbReference>
<dbReference type="InterPro" id="IPR016163">
    <property type="entry name" value="Ald_DH_C"/>
</dbReference>
<dbReference type="InterPro" id="IPR016162">
    <property type="entry name" value="Ald_DH_N"/>
</dbReference>
<dbReference type="InterPro" id="IPR015590">
    <property type="entry name" value="Aldehyde_DH_dom"/>
</dbReference>
<dbReference type="InterPro" id="IPR020593">
    <property type="entry name" value="G-glutamylP_reductase_CS"/>
</dbReference>
<dbReference type="InterPro" id="IPR012134">
    <property type="entry name" value="Glu-5-SA_DH"/>
</dbReference>
<dbReference type="InterPro" id="IPR000965">
    <property type="entry name" value="GPR_dom"/>
</dbReference>
<dbReference type="NCBIfam" id="NF001221">
    <property type="entry name" value="PRK00197.1"/>
    <property type="match status" value="1"/>
</dbReference>
<dbReference type="NCBIfam" id="TIGR00407">
    <property type="entry name" value="proA"/>
    <property type="match status" value="1"/>
</dbReference>
<dbReference type="PANTHER" id="PTHR11063:SF8">
    <property type="entry name" value="DELTA-1-PYRROLINE-5-CARBOXYLATE SYNTHASE"/>
    <property type="match status" value="1"/>
</dbReference>
<dbReference type="PANTHER" id="PTHR11063">
    <property type="entry name" value="GLUTAMATE SEMIALDEHYDE DEHYDROGENASE"/>
    <property type="match status" value="1"/>
</dbReference>
<dbReference type="Pfam" id="PF00171">
    <property type="entry name" value="Aldedh"/>
    <property type="match status" value="2"/>
</dbReference>
<dbReference type="PIRSF" id="PIRSF000151">
    <property type="entry name" value="GPR"/>
    <property type="match status" value="1"/>
</dbReference>
<dbReference type="SUPFAM" id="SSF53720">
    <property type="entry name" value="ALDH-like"/>
    <property type="match status" value="1"/>
</dbReference>
<dbReference type="PROSITE" id="PS01223">
    <property type="entry name" value="PROA"/>
    <property type="match status" value="1"/>
</dbReference>
<feature type="chain" id="PRO_0000189793" description="Gamma-glutamyl phosphate reductase">
    <location>
        <begin position="1"/>
        <end position="416"/>
    </location>
</feature>
<keyword id="KW-0028">Amino-acid biosynthesis</keyword>
<keyword id="KW-0963">Cytoplasm</keyword>
<keyword id="KW-0521">NADP</keyword>
<keyword id="KW-0560">Oxidoreductase</keyword>
<keyword id="KW-0641">Proline biosynthesis</keyword>
<comment type="function">
    <text evidence="1">Catalyzes the NADPH-dependent reduction of L-glutamate 5-phosphate into L-glutamate 5-semialdehyde and phosphate. The product spontaneously undergoes cyclization to form 1-pyrroline-5-carboxylate.</text>
</comment>
<comment type="catalytic activity">
    <reaction evidence="1">
        <text>L-glutamate 5-semialdehyde + phosphate + NADP(+) = L-glutamyl 5-phosphate + NADPH + H(+)</text>
        <dbReference type="Rhea" id="RHEA:19541"/>
        <dbReference type="ChEBI" id="CHEBI:15378"/>
        <dbReference type="ChEBI" id="CHEBI:43474"/>
        <dbReference type="ChEBI" id="CHEBI:57783"/>
        <dbReference type="ChEBI" id="CHEBI:58066"/>
        <dbReference type="ChEBI" id="CHEBI:58274"/>
        <dbReference type="ChEBI" id="CHEBI:58349"/>
        <dbReference type="EC" id="1.2.1.41"/>
    </reaction>
</comment>
<comment type="pathway">
    <text evidence="1">Amino-acid biosynthesis; L-proline biosynthesis; L-glutamate 5-semialdehyde from L-glutamate: step 2/2.</text>
</comment>
<comment type="subcellular location">
    <subcellularLocation>
        <location evidence="1">Cytoplasm</location>
    </subcellularLocation>
</comment>
<comment type="similarity">
    <text evidence="1">Belongs to the gamma-glutamyl phosphate reductase family.</text>
</comment>
<evidence type="ECO:0000255" key="1">
    <source>
        <dbReference type="HAMAP-Rule" id="MF_00412"/>
    </source>
</evidence>
<gene>
    <name evidence="1" type="primary">proA</name>
    <name type="ordered locus">spyM18_1679</name>
</gene>
<proteinExistence type="inferred from homology"/>
<organism>
    <name type="scientific">Streptococcus pyogenes serotype M18 (strain MGAS8232)</name>
    <dbReference type="NCBI Taxonomy" id="186103"/>
    <lineage>
        <taxon>Bacteria</taxon>
        <taxon>Bacillati</taxon>
        <taxon>Bacillota</taxon>
        <taxon>Bacilli</taxon>
        <taxon>Lactobacillales</taxon>
        <taxon>Streptococcaceae</taxon>
        <taxon>Streptococcus</taxon>
    </lineage>
</organism>
<accession>Q8NZX9</accession>
<sequence>MTDMRRLGQRAKQASLLIAPLSTQIKNRFLSTLAKALVDDTQTLLAANQKDLANAKEHGISDIMMDRLRLTSERIKAIAQGVQQVADLADPIGQVIKGYTNLDGLKILQKRVPLGVIAMIFESRPNVSVDAFSLAFKTNNAIILRGGKDALHSNKALVKLIRQSLEKSGITPDAVQLVEDPSHAVAEELMQATDYVDVLIPRGGAKLIQTVKEKAKVPVIETGVGNVHIYVDAQADLDMATNIVINAKTKRPSVCNAAEGLVIHEAVAARFIPMLEKAINQVQPVEWRADDKALPLFEQAVPAKAEDFETEFLDYIMSVKVVSSLEEAISWINQHTSHHSEAIITRDIKAAETFQDLVDAAAVYVNASTRFTDGFVFGLGAEIGISTQKMHARGPMGLEALTSTKFYINGDGHIRE</sequence>
<reference key="1">
    <citation type="journal article" date="2002" name="Proc. Natl. Acad. Sci. U.S.A.">
        <title>Genome sequence and comparative microarray analysis of serotype M18 group A Streptococcus strains associated with acute rheumatic fever outbreaks.</title>
        <authorList>
            <person name="Smoot J.C."/>
            <person name="Barbian K.D."/>
            <person name="Van Gompel J.J."/>
            <person name="Smoot L.M."/>
            <person name="Chaussee M.S."/>
            <person name="Sylva G.L."/>
            <person name="Sturdevant D.E."/>
            <person name="Ricklefs S.M."/>
            <person name="Porcella S.F."/>
            <person name="Parkins L.D."/>
            <person name="Beres S.B."/>
            <person name="Campbell D.S."/>
            <person name="Smith T.M."/>
            <person name="Zhang Q."/>
            <person name="Kapur V."/>
            <person name="Daly J.A."/>
            <person name="Veasy L.G."/>
            <person name="Musser J.M."/>
        </authorList>
    </citation>
    <scope>NUCLEOTIDE SEQUENCE [LARGE SCALE GENOMIC DNA]</scope>
    <source>
        <strain>MGAS8232</strain>
    </source>
</reference>
<name>PROA_STRP8</name>
<protein>
    <recommendedName>
        <fullName evidence="1">Gamma-glutamyl phosphate reductase</fullName>
        <shortName evidence="1">GPR</shortName>
        <ecNumber evidence="1">1.2.1.41</ecNumber>
    </recommendedName>
    <alternativeName>
        <fullName evidence="1">Glutamate-5-semialdehyde dehydrogenase</fullName>
    </alternativeName>
    <alternativeName>
        <fullName evidence="1">Glutamyl-gamma-semialdehyde dehydrogenase</fullName>
        <shortName evidence="1">GSA dehydrogenase</shortName>
    </alternativeName>
</protein>